<feature type="chain" id="PRO_0000383713" description="Cytosolic Fe-S cluster assembly factor nar1">
    <location>
        <begin position="1"/>
        <end position="597"/>
    </location>
</feature>
<feature type="region of interest" description="Disordered" evidence="3">
    <location>
        <begin position="419"/>
        <end position="447"/>
    </location>
</feature>
<feature type="region of interest" description="Disordered" evidence="3">
    <location>
        <begin position="482"/>
        <end position="504"/>
    </location>
</feature>
<feature type="compositionally biased region" description="Polar residues" evidence="3">
    <location>
        <begin position="430"/>
        <end position="447"/>
    </location>
</feature>
<feature type="compositionally biased region" description="Polar residues" evidence="3">
    <location>
        <begin position="485"/>
        <end position="494"/>
    </location>
</feature>
<feature type="binding site" evidence="2">
    <location>
        <position position="20"/>
    </location>
    <ligand>
        <name>[4Fe-4S] cluster</name>
        <dbReference type="ChEBI" id="CHEBI:49883"/>
        <label>1</label>
    </ligand>
</feature>
<feature type="binding site" evidence="2">
    <location>
        <position position="61"/>
    </location>
    <ligand>
        <name>[4Fe-4S] cluster</name>
        <dbReference type="ChEBI" id="CHEBI:49883"/>
        <label>1</label>
    </ligand>
</feature>
<feature type="binding site" evidence="2">
    <location>
        <position position="64"/>
    </location>
    <ligand>
        <name>[4Fe-4S] cluster</name>
        <dbReference type="ChEBI" id="CHEBI:49883"/>
        <label>1</label>
    </ligand>
</feature>
<feature type="binding site" evidence="2">
    <location>
        <position position="67"/>
    </location>
    <ligand>
        <name>[4Fe-4S] cluster</name>
        <dbReference type="ChEBI" id="CHEBI:49883"/>
        <label>1</label>
    </ligand>
</feature>
<feature type="binding site" evidence="2">
    <location>
        <position position="209"/>
    </location>
    <ligand>
        <name>[4Fe-4S] cluster</name>
        <dbReference type="ChEBI" id="CHEBI:49883"/>
        <label>2</label>
    </ligand>
</feature>
<feature type="binding site" evidence="2">
    <location>
        <position position="264"/>
    </location>
    <ligand>
        <name>[4Fe-4S] cluster</name>
        <dbReference type="ChEBI" id="CHEBI:49883"/>
        <label>2</label>
    </ligand>
</feature>
<feature type="binding site" evidence="2">
    <location>
        <position position="464"/>
    </location>
    <ligand>
        <name>[4Fe-4S] cluster</name>
        <dbReference type="ChEBI" id="CHEBI:49883"/>
        <label>2</label>
    </ligand>
</feature>
<feature type="binding site" evidence="2">
    <location>
        <position position="468"/>
    </location>
    <ligand>
        <name>[4Fe-4S] cluster</name>
        <dbReference type="ChEBI" id="CHEBI:49883"/>
        <label>2</label>
    </ligand>
</feature>
<keyword id="KW-0004">4Fe-4S</keyword>
<keyword id="KW-0408">Iron</keyword>
<keyword id="KW-0411">Iron-sulfur</keyword>
<keyword id="KW-0479">Metal-binding</keyword>
<keyword id="KW-1185">Reference proteome</keyword>
<sequence length="597" mass="64413">MSAILSADDLNDFISPGVACIKPVETLPQKESQSENPYEVTKEDKIQPENLPPAQISLTDCLACSGCVTSAEAVLISLQSHAEVLNTLDAYPEFRLSNESGQDDIKTTETADSESRVFVASVSPQVRASLATTYGISEREAQCMIDQFLSGSQGLRAGGKFHNGFAWVVDTNTMREAVLALTADEVANSLTSIDPLNTLPKRPILSSACPGWICYAEKTHPFILPHLSRLKSPQALTGTLLKSVLSKALGISPTRIWHLAIMPCFDKKLEASREELTDSAWGPTPSEPHTPVRDVDCVITSRELLTLAASRGISLPRLPLKPLPRSYYSPFPDRSLDSFLFSKRSSGQTAASGTSGGYLHHVLTTFQAKNPGSQIVTQRGRNADVVEYVLMSPGGEPLLKAARYYGFRNIQNLVRKLKPARASRLPGARQSATSAGGSRRQLASRNAASAGSGTDYAYVEVMACPGGCTNGGGQVRIEDAREAASNMSVESQTEPPEAALKPTPHEQRAWLARVDEAYYSADSDSEVPATSEPASVISRDAEIHGVLQHWSEYMNIPLSKLAYTSYREVESDVGKTQTGPNDTARVVELASKIGGGW</sequence>
<comment type="function">
    <text evidence="1">Component of the cytosolic Fe/S protein assembly machinery. Required for maturation of extramitochondrial Fe/S proteins. May play a role in the transfer of pre-assembled Fe/S clusters to target apoproteins (By similarity).</text>
</comment>
<comment type="similarity">
    <text evidence="4">Belongs to the NARF family.</text>
</comment>
<proteinExistence type="inferred from homology"/>
<protein>
    <recommendedName>
        <fullName>Cytosolic Fe-S cluster assembly factor nar1</fullName>
    </recommendedName>
    <alternativeName>
        <fullName>Nuclear architecture-related protein 1</fullName>
    </alternativeName>
</protein>
<dbReference type="EMBL" id="DS027054">
    <property type="protein sequence ID" value="EAW10627.1"/>
    <property type="molecule type" value="Genomic_DNA"/>
</dbReference>
<dbReference type="RefSeq" id="XP_001272053.1">
    <property type="nucleotide sequence ID" value="XM_001272052.1"/>
</dbReference>
<dbReference type="SMR" id="A1CIC2"/>
<dbReference type="STRING" id="344612.A1CIC2"/>
<dbReference type="EnsemblFungi" id="EAW10627">
    <property type="protein sequence ID" value="EAW10627"/>
    <property type="gene ID" value="ACLA_050990"/>
</dbReference>
<dbReference type="GeneID" id="4703780"/>
<dbReference type="KEGG" id="act:ACLA_050990"/>
<dbReference type="VEuPathDB" id="FungiDB:ACLA_050990"/>
<dbReference type="eggNOG" id="KOG2439">
    <property type="taxonomic scope" value="Eukaryota"/>
</dbReference>
<dbReference type="HOGENOM" id="CLU_018240_0_1_1"/>
<dbReference type="OMA" id="GYLHHVL"/>
<dbReference type="OrthoDB" id="10253113at2759"/>
<dbReference type="Proteomes" id="UP000006701">
    <property type="component" value="Unassembled WGS sequence"/>
</dbReference>
<dbReference type="GO" id="GO:0051539">
    <property type="term" value="F:4 iron, 4 sulfur cluster binding"/>
    <property type="evidence" value="ECO:0007669"/>
    <property type="project" value="UniProtKB-KW"/>
</dbReference>
<dbReference type="GO" id="GO:0051536">
    <property type="term" value="F:iron-sulfur cluster binding"/>
    <property type="evidence" value="ECO:0000250"/>
    <property type="project" value="UniProtKB"/>
</dbReference>
<dbReference type="GO" id="GO:0046872">
    <property type="term" value="F:metal ion binding"/>
    <property type="evidence" value="ECO:0007669"/>
    <property type="project" value="UniProtKB-KW"/>
</dbReference>
<dbReference type="GO" id="GO:0016226">
    <property type="term" value="P:iron-sulfur cluster assembly"/>
    <property type="evidence" value="ECO:0000250"/>
    <property type="project" value="UniProtKB"/>
</dbReference>
<dbReference type="FunFam" id="3.30.70.20:FF:000042">
    <property type="entry name" value="Cytosolic Fe-S cluster assembly factor NAR1"/>
    <property type="match status" value="1"/>
</dbReference>
<dbReference type="FunFam" id="3.40.50.1780:FF:000004">
    <property type="entry name" value="Cytosolic Fe-S cluster assembly factor nar1"/>
    <property type="match status" value="1"/>
</dbReference>
<dbReference type="Gene3D" id="3.40.50.1780">
    <property type="match status" value="2"/>
</dbReference>
<dbReference type="Gene3D" id="3.40.950.10">
    <property type="entry name" value="Fe-only Hydrogenase (Larger Subunit), Chain L, domain 3"/>
    <property type="match status" value="2"/>
</dbReference>
<dbReference type="InterPro" id="IPR050340">
    <property type="entry name" value="Cytosolic_Fe-S_CAF"/>
</dbReference>
<dbReference type="InterPro" id="IPR009016">
    <property type="entry name" value="Fe_hydrogenase"/>
</dbReference>
<dbReference type="InterPro" id="IPR004108">
    <property type="entry name" value="Fe_hydrogenase_lsu_C"/>
</dbReference>
<dbReference type="PANTHER" id="PTHR11615">
    <property type="entry name" value="NITRATE, FORMATE, IRON DEHYDROGENASE"/>
    <property type="match status" value="1"/>
</dbReference>
<dbReference type="Pfam" id="PF02906">
    <property type="entry name" value="Fe_hyd_lg_C"/>
    <property type="match status" value="1"/>
</dbReference>
<dbReference type="SUPFAM" id="SSF53920">
    <property type="entry name" value="Fe-only hydrogenase"/>
    <property type="match status" value="1"/>
</dbReference>
<name>NAR1_ASPCL</name>
<accession>A1CIC2</accession>
<evidence type="ECO:0000250" key="1"/>
<evidence type="ECO:0000255" key="2"/>
<evidence type="ECO:0000256" key="3">
    <source>
        <dbReference type="SAM" id="MobiDB-lite"/>
    </source>
</evidence>
<evidence type="ECO:0000305" key="4"/>
<reference key="1">
    <citation type="journal article" date="2008" name="PLoS Genet.">
        <title>Genomic islands in the pathogenic filamentous fungus Aspergillus fumigatus.</title>
        <authorList>
            <person name="Fedorova N.D."/>
            <person name="Khaldi N."/>
            <person name="Joardar V.S."/>
            <person name="Maiti R."/>
            <person name="Amedeo P."/>
            <person name="Anderson M.J."/>
            <person name="Crabtree J."/>
            <person name="Silva J.C."/>
            <person name="Badger J.H."/>
            <person name="Albarraq A."/>
            <person name="Angiuoli S."/>
            <person name="Bussey H."/>
            <person name="Bowyer P."/>
            <person name="Cotty P.J."/>
            <person name="Dyer P.S."/>
            <person name="Egan A."/>
            <person name="Galens K."/>
            <person name="Fraser-Liggett C.M."/>
            <person name="Haas B.J."/>
            <person name="Inman J.M."/>
            <person name="Kent R."/>
            <person name="Lemieux S."/>
            <person name="Malavazi I."/>
            <person name="Orvis J."/>
            <person name="Roemer T."/>
            <person name="Ronning C.M."/>
            <person name="Sundaram J.P."/>
            <person name="Sutton G."/>
            <person name="Turner G."/>
            <person name="Venter J.C."/>
            <person name="White O.R."/>
            <person name="Whitty B.R."/>
            <person name="Youngman P."/>
            <person name="Wolfe K.H."/>
            <person name="Goldman G.H."/>
            <person name="Wortman J.R."/>
            <person name="Jiang B."/>
            <person name="Denning D.W."/>
            <person name="Nierman W.C."/>
        </authorList>
    </citation>
    <scope>NUCLEOTIDE SEQUENCE [LARGE SCALE GENOMIC DNA]</scope>
    <source>
        <strain>ATCC 1007 / CBS 513.65 / DSM 816 / NCTC 3887 / NRRL 1 / QM 1276 / 107</strain>
    </source>
</reference>
<organism>
    <name type="scientific">Aspergillus clavatus (strain ATCC 1007 / CBS 513.65 / DSM 816 / NCTC 3887 / NRRL 1 / QM 1276 / 107)</name>
    <dbReference type="NCBI Taxonomy" id="344612"/>
    <lineage>
        <taxon>Eukaryota</taxon>
        <taxon>Fungi</taxon>
        <taxon>Dikarya</taxon>
        <taxon>Ascomycota</taxon>
        <taxon>Pezizomycotina</taxon>
        <taxon>Eurotiomycetes</taxon>
        <taxon>Eurotiomycetidae</taxon>
        <taxon>Eurotiales</taxon>
        <taxon>Aspergillaceae</taxon>
        <taxon>Aspergillus</taxon>
        <taxon>Aspergillus subgen. Fumigati</taxon>
    </lineage>
</organism>
<gene>
    <name type="primary">nar1</name>
    <name type="ORF">ACLA_050990</name>
</gene>